<sequence>MSVLDRLGQKLLFAFDPETAHGLSIAALRCGLPAGTRAVRDIRLKVSLCGLDFPNPLGMAAGYDKDAEVPDALLGLGFGFAEVGTVTPLPQAGNPKPRIFRLTADEAVINRLGFNNEGHAAAEKRLAARKGRPGIVGVNIGANKDSADRIGDYERGVGRFARHASYLTVNISSPNTPGLRNMQAREQLGELLSRVMAARASAATQPPIFLKIAPDLVEAELEDIAAEVVEKRIDGIIVSNTTISRPPLRSGDVGRETGGLSGKPLFERSTIVLAKMRKLLGPGIAIIGVGGVDSAETALEKIRAGADLVQLYTGMIYAGPALPGRIVAGMARFCETERLKSIGELRDSHLDRWASKPLS</sequence>
<accession>Q98B89</accession>
<comment type="function">
    <text evidence="1">Catalyzes the conversion of dihydroorotate to orotate with quinone as electron acceptor.</text>
</comment>
<comment type="catalytic activity">
    <reaction evidence="1">
        <text>(S)-dihydroorotate + a quinone = orotate + a quinol</text>
        <dbReference type="Rhea" id="RHEA:30187"/>
        <dbReference type="ChEBI" id="CHEBI:24646"/>
        <dbReference type="ChEBI" id="CHEBI:30839"/>
        <dbReference type="ChEBI" id="CHEBI:30864"/>
        <dbReference type="ChEBI" id="CHEBI:132124"/>
        <dbReference type="EC" id="1.3.5.2"/>
    </reaction>
</comment>
<comment type="cofactor">
    <cofactor evidence="1">
        <name>FMN</name>
        <dbReference type="ChEBI" id="CHEBI:58210"/>
    </cofactor>
    <text evidence="1">Binds 1 FMN per subunit.</text>
</comment>
<comment type="pathway">
    <text evidence="1">Pyrimidine metabolism; UMP biosynthesis via de novo pathway; orotate from (S)-dihydroorotate (quinone route): step 1/1.</text>
</comment>
<comment type="subunit">
    <text evidence="1">Monomer.</text>
</comment>
<comment type="subcellular location">
    <subcellularLocation>
        <location evidence="1">Cell membrane</location>
        <topology evidence="1">Peripheral membrane protein</topology>
    </subcellularLocation>
</comment>
<comment type="similarity">
    <text evidence="1">Belongs to the dihydroorotate dehydrogenase family. Type 2 subfamily.</text>
</comment>
<proteinExistence type="inferred from homology"/>
<keyword id="KW-1003">Cell membrane</keyword>
<keyword id="KW-0285">Flavoprotein</keyword>
<keyword id="KW-0288">FMN</keyword>
<keyword id="KW-0472">Membrane</keyword>
<keyword id="KW-0560">Oxidoreductase</keyword>
<keyword id="KW-0665">Pyrimidine biosynthesis</keyword>
<dbReference type="EC" id="1.3.5.2" evidence="1"/>
<dbReference type="EMBL" id="BA000012">
    <property type="protein sequence ID" value="BAB52083.1"/>
    <property type="molecule type" value="Genomic_DNA"/>
</dbReference>
<dbReference type="RefSeq" id="WP_010913421.1">
    <property type="nucleotide sequence ID" value="NC_002678.2"/>
</dbReference>
<dbReference type="SMR" id="Q98B89"/>
<dbReference type="KEGG" id="mlo:mll5681"/>
<dbReference type="PATRIC" id="fig|266835.9.peg.4515"/>
<dbReference type="eggNOG" id="COG0167">
    <property type="taxonomic scope" value="Bacteria"/>
</dbReference>
<dbReference type="HOGENOM" id="CLU_013640_2_1_5"/>
<dbReference type="UniPathway" id="UPA00070">
    <property type="reaction ID" value="UER00946"/>
</dbReference>
<dbReference type="Proteomes" id="UP000000552">
    <property type="component" value="Chromosome"/>
</dbReference>
<dbReference type="GO" id="GO:0005737">
    <property type="term" value="C:cytoplasm"/>
    <property type="evidence" value="ECO:0007669"/>
    <property type="project" value="InterPro"/>
</dbReference>
<dbReference type="GO" id="GO:0005886">
    <property type="term" value="C:plasma membrane"/>
    <property type="evidence" value="ECO:0007669"/>
    <property type="project" value="UniProtKB-SubCell"/>
</dbReference>
<dbReference type="GO" id="GO:0106430">
    <property type="term" value="F:dihydroorotate dehydrogenase (quinone) activity"/>
    <property type="evidence" value="ECO:0007669"/>
    <property type="project" value="UniProtKB-EC"/>
</dbReference>
<dbReference type="GO" id="GO:0006207">
    <property type="term" value="P:'de novo' pyrimidine nucleobase biosynthetic process"/>
    <property type="evidence" value="ECO:0007669"/>
    <property type="project" value="InterPro"/>
</dbReference>
<dbReference type="GO" id="GO:0044205">
    <property type="term" value="P:'de novo' UMP biosynthetic process"/>
    <property type="evidence" value="ECO:0007669"/>
    <property type="project" value="UniProtKB-UniRule"/>
</dbReference>
<dbReference type="CDD" id="cd04738">
    <property type="entry name" value="DHOD_2_like"/>
    <property type="match status" value="1"/>
</dbReference>
<dbReference type="Gene3D" id="3.20.20.70">
    <property type="entry name" value="Aldolase class I"/>
    <property type="match status" value="1"/>
</dbReference>
<dbReference type="HAMAP" id="MF_00225">
    <property type="entry name" value="DHO_dh_type2"/>
    <property type="match status" value="1"/>
</dbReference>
<dbReference type="InterPro" id="IPR013785">
    <property type="entry name" value="Aldolase_TIM"/>
</dbReference>
<dbReference type="InterPro" id="IPR050074">
    <property type="entry name" value="DHO_dehydrogenase"/>
</dbReference>
<dbReference type="InterPro" id="IPR005719">
    <property type="entry name" value="Dihydroorotate_DH_2"/>
</dbReference>
<dbReference type="InterPro" id="IPR005720">
    <property type="entry name" value="Dihydroorotate_DH_cat"/>
</dbReference>
<dbReference type="InterPro" id="IPR001295">
    <property type="entry name" value="Dihydroorotate_DH_CS"/>
</dbReference>
<dbReference type="NCBIfam" id="NF003645">
    <property type="entry name" value="PRK05286.1-2"/>
    <property type="match status" value="1"/>
</dbReference>
<dbReference type="NCBIfam" id="NF003652">
    <property type="entry name" value="PRK05286.2-5"/>
    <property type="match status" value="1"/>
</dbReference>
<dbReference type="NCBIfam" id="TIGR01036">
    <property type="entry name" value="pyrD_sub2"/>
    <property type="match status" value="1"/>
</dbReference>
<dbReference type="PANTHER" id="PTHR48109:SF4">
    <property type="entry name" value="DIHYDROOROTATE DEHYDROGENASE (QUINONE), MITOCHONDRIAL"/>
    <property type="match status" value="1"/>
</dbReference>
<dbReference type="PANTHER" id="PTHR48109">
    <property type="entry name" value="DIHYDROOROTATE DEHYDROGENASE (QUINONE), MITOCHONDRIAL-RELATED"/>
    <property type="match status" value="1"/>
</dbReference>
<dbReference type="Pfam" id="PF01180">
    <property type="entry name" value="DHO_dh"/>
    <property type="match status" value="1"/>
</dbReference>
<dbReference type="SUPFAM" id="SSF51395">
    <property type="entry name" value="FMN-linked oxidoreductases"/>
    <property type="match status" value="1"/>
</dbReference>
<dbReference type="PROSITE" id="PS00911">
    <property type="entry name" value="DHODEHASE_1"/>
    <property type="match status" value="1"/>
</dbReference>
<dbReference type="PROSITE" id="PS00912">
    <property type="entry name" value="DHODEHASE_2"/>
    <property type="match status" value="1"/>
</dbReference>
<feature type="chain" id="PRO_0000336484" description="Dihydroorotate dehydrogenase (quinone)">
    <location>
        <begin position="1"/>
        <end position="359"/>
    </location>
</feature>
<feature type="active site" description="Nucleophile" evidence="1">
    <location>
        <position position="173"/>
    </location>
</feature>
<feature type="binding site" evidence="1">
    <location>
        <begin position="61"/>
        <end position="65"/>
    </location>
    <ligand>
        <name>FMN</name>
        <dbReference type="ChEBI" id="CHEBI:58210"/>
    </ligand>
</feature>
<feature type="binding site" evidence="1">
    <location>
        <position position="65"/>
    </location>
    <ligand>
        <name>substrate</name>
    </ligand>
</feature>
<feature type="binding site" evidence="1">
    <location>
        <position position="85"/>
    </location>
    <ligand>
        <name>FMN</name>
        <dbReference type="ChEBI" id="CHEBI:58210"/>
    </ligand>
</feature>
<feature type="binding site" evidence="1">
    <location>
        <begin position="110"/>
        <end position="114"/>
    </location>
    <ligand>
        <name>substrate</name>
    </ligand>
</feature>
<feature type="binding site" evidence="1">
    <location>
        <position position="139"/>
    </location>
    <ligand>
        <name>FMN</name>
        <dbReference type="ChEBI" id="CHEBI:58210"/>
    </ligand>
</feature>
<feature type="binding site" evidence="1">
    <location>
        <position position="170"/>
    </location>
    <ligand>
        <name>FMN</name>
        <dbReference type="ChEBI" id="CHEBI:58210"/>
    </ligand>
</feature>
<feature type="binding site" evidence="1">
    <location>
        <position position="170"/>
    </location>
    <ligand>
        <name>substrate</name>
    </ligand>
</feature>
<feature type="binding site" evidence="1">
    <location>
        <position position="175"/>
    </location>
    <ligand>
        <name>substrate</name>
    </ligand>
</feature>
<feature type="binding site" evidence="1">
    <location>
        <position position="211"/>
    </location>
    <ligand>
        <name>FMN</name>
        <dbReference type="ChEBI" id="CHEBI:58210"/>
    </ligand>
</feature>
<feature type="binding site" evidence="1">
    <location>
        <position position="239"/>
    </location>
    <ligand>
        <name>FMN</name>
        <dbReference type="ChEBI" id="CHEBI:58210"/>
    </ligand>
</feature>
<feature type="binding site" evidence="1">
    <location>
        <begin position="240"/>
        <end position="241"/>
    </location>
    <ligand>
        <name>substrate</name>
    </ligand>
</feature>
<feature type="binding site" evidence="1">
    <location>
        <position position="262"/>
    </location>
    <ligand>
        <name>FMN</name>
        <dbReference type="ChEBI" id="CHEBI:58210"/>
    </ligand>
</feature>
<feature type="binding site" evidence="1">
    <location>
        <position position="291"/>
    </location>
    <ligand>
        <name>FMN</name>
        <dbReference type="ChEBI" id="CHEBI:58210"/>
    </ligand>
</feature>
<feature type="binding site" evidence="1">
    <location>
        <begin position="312"/>
        <end position="313"/>
    </location>
    <ligand>
        <name>FMN</name>
        <dbReference type="ChEBI" id="CHEBI:58210"/>
    </ligand>
</feature>
<protein>
    <recommendedName>
        <fullName evidence="1">Dihydroorotate dehydrogenase (quinone)</fullName>
        <ecNumber evidence="1">1.3.5.2</ecNumber>
    </recommendedName>
    <alternativeName>
        <fullName evidence="1">DHOdehase</fullName>
        <shortName evidence="1">DHOD</shortName>
        <shortName evidence="1">DHODase</shortName>
    </alternativeName>
    <alternativeName>
        <fullName evidence="1">Dihydroorotate oxidase</fullName>
    </alternativeName>
</protein>
<reference key="1">
    <citation type="journal article" date="2000" name="DNA Res.">
        <title>Complete genome structure of the nitrogen-fixing symbiotic bacterium Mesorhizobium loti.</title>
        <authorList>
            <person name="Kaneko T."/>
            <person name="Nakamura Y."/>
            <person name="Sato S."/>
            <person name="Asamizu E."/>
            <person name="Kato T."/>
            <person name="Sasamoto S."/>
            <person name="Watanabe A."/>
            <person name="Idesawa K."/>
            <person name="Ishikawa A."/>
            <person name="Kawashima K."/>
            <person name="Kimura T."/>
            <person name="Kishida Y."/>
            <person name="Kiyokawa C."/>
            <person name="Kohara M."/>
            <person name="Matsumoto M."/>
            <person name="Matsuno A."/>
            <person name="Mochizuki Y."/>
            <person name="Nakayama S."/>
            <person name="Nakazaki N."/>
            <person name="Shimpo S."/>
            <person name="Sugimoto M."/>
            <person name="Takeuchi C."/>
            <person name="Yamada M."/>
            <person name="Tabata S."/>
        </authorList>
    </citation>
    <scope>NUCLEOTIDE SEQUENCE [LARGE SCALE GENOMIC DNA]</scope>
    <source>
        <strain>LMG 29417 / CECT 9101 / MAFF 303099</strain>
    </source>
</reference>
<gene>
    <name evidence="1" type="primary">pyrD</name>
    <name type="ordered locus">mll5681</name>
</gene>
<organism>
    <name type="scientific">Mesorhizobium japonicum (strain LMG 29417 / CECT 9101 / MAFF 303099)</name>
    <name type="common">Mesorhizobium loti (strain MAFF 303099)</name>
    <dbReference type="NCBI Taxonomy" id="266835"/>
    <lineage>
        <taxon>Bacteria</taxon>
        <taxon>Pseudomonadati</taxon>
        <taxon>Pseudomonadota</taxon>
        <taxon>Alphaproteobacteria</taxon>
        <taxon>Hyphomicrobiales</taxon>
        <taxon>Phyllobacteriaceae</taxon>
        <taxon>Mesorhizobium</taxon>
    </lineage>
</organism>
<evidence type="ECO:0000255" key="1">
    <source>
        <dbReference type="HAMAP-Rule" id="MF_00225"/>
    </source>
</evidence>
<name>PYRD_RHILO</name>